<evidence type="ECO:0000250" key="1">
    <source>
        <dbReference type="UniProtKB" id="Q6PKG0"/>
    </source>
</evidence>
<evidence type="ECO:0000255" key="2">
    <source>
        <dbReference type="PROSITE-ProRule" id="PRU00332"/>
    </source>
</evidence>
<evidence type="ECO:0000256" key="3">
    <source>
        <dbReference type="SAM" id="MobiDB-lite"/>
    </source>
</evidence>
<evidence type="ECO:0000269" key="4">
    <source>
    </source>
</evidence>
<evidence type="ECO:0000269" key="5">
    <source>
    </source>
</evidence>
<evidence type="ECO:0000305" key="6"/>
<comment type="function">
    <text evidence="4 5">RNA-binding protein that promotes oogenesis by repressing fem-3 expression during germline development (PubMed:18515547, PubMed:20663921). Binds poly-U and poly-G stretches of RNA in vitro (PubMed:18515547). Regulates target RNAs expression either by regulating their stability or translation (PubMed:20663921).</text>
</comment>
<comment type="subcellular location">
    <subcellularLocation>
        <location evidence="4">Cytoplasm</location>
        <location evidence="4">P-body</location>
    </subcellularLocation>
</comment>
<comment type="alternative products">
    <event type="alternative splicing"/>
    <isoform>
        <id>D5MCN2-1</id>
        <name>1</name>
        <sequence type="displayed"/>
    </isoform>
    <isoform>
        <id>D5MCN2-2</id>
        <name>a</name>
        <sequence type="described" ref="VSP_054252 VSP_054253 VSP_054254"/>
    </isoform>
</comment>
<comment type="disruption phenotype">
    <text evidence="4">Oogenesis defects similar to defects due to hyperactive Ras-MAPK signaling. Increased mRNA levels of several components of the MAPK-signaling pathway.</text>
</comment>
<feature type="chain" id="PRO_0000428732" description="La-related protein 1">
    <location>
        <begin position="1"/>
        <end position="1150"/>
    </location>
</feature>
<feature type="domain" description="HTH La-type RNA-binding" evidence="2">
    <location>
        <begin position="573"/>
        <end position="665"/>
    </location>
</feature>
<feature type="region of interest" description="Disordered" evidence="3">
    <location>
        <begin position="1"/>
        <end position="105"/>
    </location>
</feature>
<feature type="region of interest" description="Disordered" evidence="3">
    <location>
        <begin position="161"/>
        <end position="461"/>
    </location>
</feature>
<feature type="region of interest" description="Disordered" evidence="3">
    <location>
        <begin position="667"/>
        <end position="784"/>
    </location>
</feature>
<feature type="region of interest" description="Disordered" evidence="3">
    <location>
        <begin position="851"/>
        <end position="958"/>
    </location>
</feature>
<feature type="region of interest" description="Interaction with mRNA" evidence="1">
    <location>
        <begin position="990"/>
        <end position="1140"/>
    </location>
</feature>
<feature type="compositionally biased region" description="Low complexity" evidence="3">
    <location>
        <begin position="25"/>
        <end position="40"/>
    </location>
</feature>
<feature type="compositionally biased region" description="Basic and acidic residues" evidence="3">
    <location>
        <begin position="55"/>
        <end position="74"/>
    </location>
</feature>
<feature type="compositionally biased region" description="Basic residues" evidence="3">
    <location>
        <begin position="75"/>
        <end position="85"/>
    </location>
</feature>
<feature type="compositionally biased region" description="Basic and acidic residues" evidence="3">
    <location>
        <begin position="86"/>
        <end position="105"/>
    </location>
</feature>
<feature type="compositionally biased region" description="Basic and acidic residues" evidence="3">
    <location>
        <begin position="184"/>
        <end position="198"/>
    </location>
</feature>
<feature type="compositionally biased region" description="Low complexity" evidence="3">
    <location>
        <begin position="202"/>
        <end position="219"/>
    </location>
</feature>
<feature type="compositionally biased region" description="Low complexity" evidence="3">
    <location>
        <begin position="235"/>
        <end position="249"/>
    </location>
</feature>
<feature type="compositionally biased region" description="Gly residues" evidence="3">
    <location>
        <begin position="274"/>
        <end position="285"/>
    </location>
</feature>
<feature type="compositionally biased region" description="Basic and acidic residues" evidence="3">
    <location>
        <begin position="286"/>
        <end position="303"/>
    </location>
</feature>
<feature type="compositionally biased region" description="Polar residues" evidence="3">
    <location>
        <begin position="336"/>
        <end position="346"/>
    </location>
</feature>
<feature type="compositionally biased region" description="Polar residues" evidence="3">
    <location>
        <begin position="370"/>
        <end position="380"/>
    </location>
</feature>
<feature type="compositionally biased region" description="Polar residues" evidence="3">
    <location>
        <begin position="403"/>
        <end position="412"/>
    </location>
</feature>
<feature type="compositionally biased region" description="Basic and acidic residues" evidence="3">
    <location>
        <begin position="415"/>
        <end position="430"/>
    </location>
</feature>
<feature type="compositionally biased region" description="Polar residues" evidence="3">
    <location>
        <begin position="675"/>
        <end position="686"/>
    </location>
</feature>
<feature type="compositionally biased region" description="Low complexity" evidence="3">
    <location>
        <begin position="697"/>
        <end position="710"/>
    </location>
</feature>
<feature type="compositionally biased region" description="Low complexity" evidence="3">
    <location>
        <begin position="740"/>
        <end position="755"/>
    </location>
</feature>
<feature type="compositionally biased region" description="Polar residues" evidence="3">
    <location>
        <begin position="856"/>
        <end position="865"/>
    </location>
</feature>
<feature type="compositionally biased region" description="Basic and acidic residues" evidence="3">
    <location>
        <begin position="870"/>
        <end position="880"/>
    </location>
</feature>
<feature type="compositionally biased region" description="Basic and acidic residues" evidence="3">
    <location>
        <begin position="919"/>
        <end position="928"/>
    </location>
</feature>
<feature type="splice variant" id="VSP_054252" description="In isoform a." evidence="6">
    <location>
        <begin position="1"/>
        <end position="256"/>
    </location>
</feature>
<feature type="splice variant" id="VSP_054253" description="In isoform a." evidence="6">
    <location>
        <begin position="316"/>
        <end position="332"/>
    </location>
</feature>
<feature type="splice variant" id="VSP_054254" description="In isoform a." evidence="6">
    <location>
        <begin position="855"/>
        <end position="913"/>
    </location>
</feature>
<gene>
    <name type="primary">larp-1</name>
    <name type="ORF">R144.7</name>
</gene>
<protein>
    <recommendedName>
        <fullName>La-related protein 1</fullName>
    </recommendedName>
    <alternativeName>
        <fullName>La ribonucleoprotein domain family member 1</fullName>
    </alternativeName>
</protein>
<organism>
    <name type="scientific">Caenorhabditis elegans</name>
    <dbReference type="NCBI Taxonomy" id="6239"/>
    <lineage>
        <taxon>Eukaryota</taxon>
        <taxon>Metazoa</taxon>
        <taxon>Ecdysozoa</taxon>
        <taxon>Nematoda</taxon>
        <taxon>Chromadorea</taxon>
        <taxon>Rhabditida</taxon>
        <taxon>Rhabditina</taxon>
        <taxon>Rhabditomorpha</taxon>
        <taxon>Rhabditoidea</taxon>
        <taxon>Rhabditidae</taxon>
        <taxon>Peloderinae</taxon>
        <taxon>Caenorhabditis</taxon>
    </lineage>
</organism>
<dbReference type="EMBL" id="FO080694">
    <property type="protein sequence ID" value="CCD65881.2"/>
    <property type="molecule type" value="Genomic_DNA"/>
</dbReference>
<dbReference type="EMBL" id="FO080694">
    <property type="protein sequence ID" value="CCD65882.1"/>
    <property type="molecule type" value="Genomic_DNA"/>
</dbReference>
<dbReference type="RefSeq" id="NP_001040867.2">
    <molecule id="D5MCN2-2"/>
    <property type="nucleotide sequence ID" value="NM_001047402.3"/>
</dbReference>
<dbReference type="RefSeq" id="NP_001040868.3">
    <molecule id="D5MCN2-1"/>
    <property type="nucleotide sequence ID" value="NM_001047403.5"/>
</dbReference>
<dbReference type="SMR" id="D5MCN2"/>
<dbReference type="BioGRID" id="40913">
    <property type="interactions" value="13"/>
</dbReference>
<dbReference type="FunCoup" id="D5MCN2">
    <property type="interactions" value="75"/>
</dbReference>
<dbReference type="STRING" id="6239.R144.7b.1"/>
<dbReference type="PaxDb" id="6239-R144.7b"/>
<dbReference type="PeptideAtlas" id="D5MCN2"/>
<dbReference type="EnsemblMetazoa" id="R144.7a.1">
    <molecule id="D5MCN2-2"/>
    <property type="protein sequence ID" value="R144.7a.1"/>
    <property type="gene ID" value="WBGene00020097"/>
</dbReference>
<dbReference type="EnsemblMetazoa" id="R144.7b.1">
    <molecule id="D5MCN2-1"/>
    <property type="protein sequence ID" value="R144.7b.1"/>
    <property type="gene ID" value="WBGene00020097"/>
</dbReference>
<dbReference type="GeneID" id="175680"/>
<dbReference type="KEGG" id="cel:CELE_R144.7"/>
<dbReference type="AGR" id="WB:WBGene00020097"/>
<dbReference type="CTD" id="175680"/>
<dbReference type="WormBase" id="R144.7a">
    <molecule id="D5MCN2-2"/>
    <property type="protein sequence ID" value="CE44790"/>
    <property type="gene ID" value="WBGene00020097"/>
    <property type="gene designation" value="larp-1"/>
</dbReference>
<dbReference type="WormBase" id="R144.7b">
    <molecule id="D5MCN2-1"/>
    <property type="protein sequence ID" value="CE48058"/>
    <property type="gene ID" value="WBGene00020097"/>
    <property type="gene designation" value="larp-1"/>
</dbReference>
<dbReference type="eggNOG" id="KOG2590">
    <property type="taxonomic scope" value="Eukaryota"/>
</dbReference>
<dbReference type="GeneTree" id="ENSGT00940000169209"/>
<dbReference type="InParanoid" id="D5MCN2"/>
<dbReference type="OMA" id="YMTLMEA"/>
<dbReference type="OrthoDB" id="340227at2759"/>
<dbReference type="PhylomeDB" id="D5MCN2"/>
<dbReference type="PRO" id="PR:D5MCN2"/>
<dbReference type="Proteomes" id="UP000001940">
    <property type="component" value="Chromosome III"/>
</dbReference>
<dbReference type="Bgee" id="WBGene00020097">
    <property type="expression patterns" value="Expressed in pharyngeal muscle cell (C elegans) and 3 other cell types or tissues"/>
</dbReference>
<dbReference type="GO" id="GO:0010494">
    <property type="term" value="C:cytoplasmic stress granule"/>
    <property type="evidence" value="ECO:0000318"/>
    <property type="project" value="GO_Central"/>
</dbReference>
<dbReference type="GO" id="GO:0005829">
    <property type="term" value="C:cytosol"/>
    <property type="evidence" value="ECO:0000318"/>
    <property type="project" value="GO_Central"/>
</dbReference>
<dbReference type="GO" id="GO:0000932">
    <property type="term" value="C:P-body"/>
    <property type="evidence" value="ECO:0000314"/>
    <property type="project" value="WormBase"/>
</dbReference>
<dbReference type="GO" id="GO:0034046">
    <property type="term" value="F:poly(G) binding"/>
    <property type="evidence" value="ECO:0000314"/>
    <property type="project" value="WormBase"/>
</dbReference>
<dbReference type="GO" id="GO:0008266">
    <property type="term" value="F:poly(U) RNA binding"/>
    <property type="evidence" value="ECO:0000314"/>
    <property type="project" value="WormBase"/>
</dbReference>
<dbReference type="GO" id="GO:0003723">
    <property type="term" value="F:RNA binding"/>
    <property type="evidence" value="ECO:0000318"/>
    <property type="project" value="GO_Central"/>
</dbReference>
<dbReference type="GO" id="GO:0000339">
    <property type="term" value="F:RNA cap binding"/>
    <property type="evidence" value="ECO:0007669"/>
    <property type="project" value="InterPro"/>
</dbReference>
<dbReference type="GO" id="GO:0048255">
    <property type="term" value="P:mRNA stabilization"/>
    <property type="evidence" value="ECO:0007669"/>
    <property type="project" value="InterPro"/>
</dbReference>
<dbReference type="GO" id="GO:0048477">
    <property type="term" value="P:oogenesis"/>
    <property type="evidence" value="ECO:0007669"/>
    <property type="project" value="UniProtKB-KW"/>
</dbReference>
<dbReference type="GO" id="GO:0045727">
    <property type="term" value="P:positive regulation of translation"/>
    <property type="evidence" value="ECO:0000318"/>
    <property type="project" value="GO_Central"/>
</dbReference>
<dbReference type="CDD" id="cd08034">
    <property type="entry name" value="LARP_1_2"/>
    <property type="match status" value="1"/>
</dbReference>
<dbReference type="FunFam" id="1.10.10.10:FF:000131">
    <property type="entry name" value="la-related protein 1B isoform X2"/>
    <property type="match status" value="1"/>
</dbReference>
<dbReference type="Gene3D" id="1.10.10.10">
    <property type="entry name" value="Winged helix-like DNA-binding domain superfamily/Winged helix DNA-binding domain"/>
    <property type="match status" value="1"/>
</dbReference>
<dbReference type="InterPro" id="IPR006607">
    <property type="entry name" value="DM15"/>
</dbReference>
<dbReference type="InterPro" id="IPR045180">
    <property type="entry name" value="La_dom_prot"/>
</dbReference>
<dbReference type="InterPro" id="IPR006630">
    <property type="entry name" value="La_HTH"/>
</dbReference>
<dbReference type="InterPro" id="IPR036388">
    <property type="entry name" value="WH-like_DNA-bd_sf"/>
</dbReference>
<dbReference type="InterPro" id="IPR036390">
    <property type="entry name" value="WH_DNA-bd_sf"/>
</dbReference>
<dbReference type="PANTHER" id="PTHR22792:SF132">
    <property type="entry name" value="LA-RELATED PROTEIN 1"/>
    <property type="match status" value="1"/>
</dbReference>
<dbReference type="PANTHER" id="PTHR22792">
    <property type="entry name" value="LUPUS LA PROTEIN-RELATED"/>
    <property type="match status" value="1"/>
</dbReference>
<dbReference type="Pfam" id="PF05383">
    <property type="entry name" value="La"/>
    <property type="match status" value="1"/>
</dbReference>
<dbReference type="Pfam" id="PF21071">
    <property type="entry name" value="LARP1_HEAT"/>
    <property type="match status" value="1"/>
</dbReference>
<dbReference type="SMART" id="SM00684">
    <property type="entry name" value="DM15"/>
    <property type="match status" value="3"/>
</dbReference>
<dbReference type="SMART" id="SM00715">
    <property type="entry name" value="LA"/>
    <property type="match status" value="1"/>
</dbReference>
<dbReference type="SUPFAM" id="SSF46785">
    <property type="entry name" value="Winged helix' DNA-binding domain"/>
    <property type="match status" value="1"/>
</dbReference>
<dbReference type="PROSITE" id="PS50961">
    <property type="entry name" value="HTH_LA"/>
    <property type="match status" value="1"/>
</dbReference>
<accession>D5MCN2</accession>
<accession>H2KZ23</accession>
<sequence length="1150" mass="128268">MAEKQPMLSFAKVVSGQAEDASSPSQQVQHTQDSSHSSTQNENSQPEKQAHPPHNRREKENVGGRSERPRGEGKGKRRNNRKGDRKPRGETKTEKPAEKVATEEVKPVEIPVVLEPAPLPAINAWFKNKEEAEAAAAAAQKEQKSETAADQFIITATPVVQKSSAPIPEKKRAVEPTPKQAAPIKEKSKSRESKKEPWKTSTAPAATAPVTETVTVAATQDWPTLAKAELNGHVSPSNSDDNNESSSNSQHKTGGKMTKNSWKKVDISVDYGSKGKGAPRGNGGEKGTRRSANDEAVRRRSGEEDSASGDEQQYWSRSKDNKSPINEMSSDRVVDSGSNGIYYQQGGTHGWKKKVNNKAGSDMPTPPNSTSPHQSESNSPEHLPKDKAPIMNGNAKNAPAANRNGNNTSTAKTGDYWHKNGGERKEDKSQPKAYYQRNDRFQARANPHAPPKLTAAQRKERGPLPRWEDIEAGDDNFDYMTLMEAQYSQYYGAPQQFEHQLDPHQASILIQQAQQHMASFAPFRPPMPMLSPHLMSPPLDRDGGVTSPVSNGEPINTAIPFAPIYNPPTAPRPVTDDTLKEYVRKQIEYYFSEENLQKDFFLRRKMGPEGYLPVALIASFPRVRSLTEDYSLILEALKDSTKVDMSPDGLQIRAPVNPTIWPLMPTVSGADSLPGPSSQAPQQFRQNGPAATAAPVESQPQASSSKPQQPEEWEEVKTRKGKGKGRLTSGSQSTNDNKRQPQQQQKSLQQSGSDQPDLDFQFDNEISGGGGSAQTPKRPEKSKKAFLSAIDSEEIGDDVISKLIIMTPSRRTLDRTGDFSTRSQNQGEFNEEVEIGLRRYEEELWTVPQEKDIPTSKVSTISAEQFNEMRGNEDAKKTSDEPPEIPLPSGTQPTPDSVWTKKAKERAAASVTVPKSPMQRRESEEQKMNRFYPISKPTAPLDAKSPRKKKTRHSEKPPVEMPVAWVLGREDALPAAPIGIAASSSQVPANHPSISLLQEDRFVQNVYSTWRQACLKQRKSLGYDCAEMNTLYRFWSFFLRDNFNRNMYEEFRKLALEDAEIGSRYGIEALFRFYSYGLEKKFRPEIYKNFMKDVTTDVQKGELYGLEKLFAFLQRSKIAKQLVVDDYLTKELNKYKSTDDFRNLPQSTKK</sequence>
<name>LARP1_CAEEL</name>
<keyword id="KW-0025">Alternative splicing</keyword>
<keyword id="KW-0963">Cytoplasm</keyword>
<keyword id="KW-0221">Differentiation</keyword>
<keyword id="KW-0896">Oogenesis</keyword>
<keyword id="KW-1185">Reference proteome</keyword>
<keyword id="KW-0694">RNA-binding</keyword>
<proteinExistence type="predicted"/>
<reference key="1">
    <citation type="journal article" date="1998" name="Science">
        <title>Genome sequence of the nematode C. elegans: a platform for investigating biology.</title>
        <authorList>
            <consortium name="The C. elegans sequencing consortium"/>
        </authorList>
    </citation>
    <scope>NUCLEOTIDE SEQUENCE [LARGE SCALE GENOMIC DNA]</scope>
    <source>
        <strain>Bristol N2</strain>
    </source>
</reference>
<reference key="2">
    <citation type="journal article" date="2008" name="RNA">
        <title>C. elegans La-related protein, LARP-1, localizes to germline P bodies and attenuates Ras-MAPK signaling during oogenesis.</title>
        <authorList>
            <person name="Nykamp K."/>
            <person name="Lee M.H."/>
            <person name="Kimble J."/>
        </authorList>
    </citation>
    <scope>FUNCTION</scope>
    <scope>DISRUPTION PHENOTYPE</scope>
    <scope>SUBCELLULAR LOCATION</scope>
</reference>
<reference key="3">
    <citation type="journal article" date="2010" name="J. Cell Sci.">
        <title>LARP-1 promotes oogenesis by repressing fem-3 in the C. elegans germline.</title>
        <authorList>
            <person name="Zanin E."/>
            <person name="Pacquelet A."/>
            <person name="Scheckel C."/>
            <person name="Ciosk R."/>
            <person name="Gotta M."/>
        </authorList>
    </citation>
    <scope>FUNCTION</scope>
</reference>